<reference key="1">
    <citation type="submission" date="2003-07" db="EMBL/GenBank/DDBJ databases">
        <title>Cloning and characterization of human novel homeodomain box gene BARHL2.</title>
        <authorList>
            <person name="Shan Y.X."/>
            <person name="Yu L."/>
            <person name="Huang C.Q."/>
            <person name="Guo Z.K."/>
        </authorList>
    </citation>
    <scope>NUCLEOTIDE SEQUENCE [MRNA]</scope>
</reference>
<reference key="2">
    <citation type="journal article" date="2004" name="Genome Res.">
        <title>The status, quality, and expansion of the NIH full-length cDNA project: the Mammalian Gene Collection (MGC).</title>
        <authorList>
            <consortium name="The MGC Project Team"/>
        </authorList>
    </citation>
    <scope>NUCLEOTIDE SEQUENCE [LARGE SCALE MRNA]</scope>
</reference>
<reference key="3">
    <citation type="journal article" date="2000" name="Hum. Mol. Genet.">
        <title>Barhl1, a gene belonging to a new subfamily of mammalian homeobox genes, is expressed in migrating neurons of the CNS.</title>
        <authorList>
            <person name="Bulfone A."/>
            <person name="Menguzzato E."/>
            <person name="Broccoli V."/>
            <person name="Marchitiello A."/>
            <person name="Gattuso C."/>
            <person name="Mariani M."/>
            <person name="Consalez G.G."/>
            <person name="Martinez S."/>
            <person name="Ballabio A."/>
            <person name="Banfi S."/>
        </authorList>
    </citation>
    <scope>NUCLEOTIDE SEQUENCE [GENOMIC DNA] OF 297-364</scope>
</reference>
<comment type="function">
    <text evidence="1">Potential regulator of neural basic helix-loop-helix genes.</text>
</comment>
<comment type="interaction">
    <interactant intactId="EBI-10316571">
        <id>Q9NY43</id>
    </interactant>
    <interactant intactId="EBI-742388">
        <id>Q9H8W4</id>
        <label>PLEKHF2</label>
    </interactant>
    <organismsDiffer>false</organismsDiffer>
    <experiments>3</experiments>
</comment>
<comment type="interaction">
    <interactant intactId="EBI-10316571">
        <id>Q9NY43</id>
    </interactant>
    <interactant intactId="EBI-307352">
        <id>Q04864</id>
        <label>REL</label>
    </interactant>
    <organismsDiffer>false</organismsDiffer>
    <experiments>3</experiments>
</comment>
<comment type="subcellular location">
    <subcellularLocation>
        <location evidence="4">Nucleus</location>
    </subcellularLocation>
</comment>
<comment type="similarity">
    <text evidence="4">Belongs to the BAR homeobox family.</text>
</comment>
<organism>
    <name type="scientific">Homo sapiens</name>
    <name type="common">Human</name>
    <dbReference type="NCBI Taxonomy" id="9606"/>
    <lineage>
        <taxon>Eukaryota</taxon>
        <taxon>Metazoa</taxon>
        <taxon>Chordata</taxon>
        <taxon>Craniata</taxon>
        <taxon>Vertebrata</taxon>
        <taxon>Euteleostomi</taxon>
        <taxon>Mammalia</taxon>
        <taxon>Eutheria</taxon>
        <taxon>Euarchontoglires</taxon>
        <taxon>Primates</taxon>
        <taxon>Haplorrhini</taxon>
        <taxon>Catarrhini</taxon>
        <taxon>Hominidae</taxon>
        <taxon>Homo</taxon>
    </lineage>
</organism>
<accession>Q9NY43</accession>
<accession>A0AVP2</accession>
<accession>Q7Z4N7</accession>
<name>BARH2_HUMAN</name>
<proteinExistence type="evidence at protein level"/>
<sequence length="387" mass="41981">MTMEGASGSSFGIDTILSSASSGSPGMMNGDFRPLGEARTADFRSQATPSPCSEIDTVGTAPSSPISVTMEPPEPHLVADATQHHHHLHHSQQPPPPAAAPTQSLQPLPQQQQPLPPQQPPPPPPQQLGSAASAPRTSTSSFLIKDILGDSKPLAACAPYSTSVSSPHHTPKQESNAVHESFRPKLEQEDSKTKLDKREDSQSDIKCHGTKEEGDREITSSRESPPVRAKKPRKARTAFSDHQLNQLERSFERQKYLSVQDRMDLAAALNLTDTQVKTWYQNRRTKWKRQTAVGLELLAEAGNYSALQRMFPSPYFYHPSLLGSMDSTTAAAAAAAMYSSMYRTPPAPHPQLQRPLVPRVLIHGLGPGGQPALNPLSSPIPGTPHPR</sequence>
<evidence type="ECO:0000250" key="1"/>
<evidence type="ECO:0000255" key="2">
    <source>
        <dbReference type="PROSITE-ProRule" id="PRU00108"/>
    </source>
</evidence>
<evidence type="ECO:0000256" key="3">
    <source>
        <dbReference type="SAM" id="MobiDB-lite"/>
    </source>
</evidence>
<evidence type="ECO:0000305" key="4"/>
<evidence type="ECO:0007829" key="5">
    <source>
        <dbReference type="PDB" id="8PMF"/>
    </source>
</evidence>
<feature type="chain" id="PRO_0000048829" description="BarH-like 2 homeobox protein">
    <location>
        <begin position="1"/>
        <end position="387"/>
    </location>
</feature>
<feature type="DNA-binding region" description="Homeobox" evidence="2">
    <location>
        <begin position="232"/>
        <end position="291"/>
    </location>
</feature>
<feature type="region of interest" description="Disordered" evidence="3">
    <location>
        <begin position="1"/>
        <end position="145"/>
    </location>
</feature>
<feature type="region of interest" description="Disordered" evidence="3">
    <location>
        <begin position="157"/>
        <end position="240"/>
    </location>
</feature>
<feature type="region of interest" description="Disordered" evidence="3">
    <location>
        <begin position="367"/>
        <end position="387"/>
    </location>
</feature>
<feature type="compositionally biased region" description="Polar residues" evidence="3">
    <location>
        <begin position="7"/>
        <end position="24"/>
    </location>
</feature>
<feature type="compositionally biased region" description="Low complexity" evidence="3">
    <location>
        <begin position="100"/>
        <end position="113"/>
    </location>
</feature>
<feature type="compositionally biased region" description="Pro residues" evidence="3">
    <location>
        <begin position="114"/>
        <end position="126"/>
    </location>
</feature>
<feature type="compositionally biased region" description="Low complexity" evidence="3">
    <location>
        <begin position="127"/>
        <end position="141"/>
    </location>
</feature>
<feature type="compositionally biased region" description="Polar residues" evidence="3">
    <location>
        <begin position="160"/>
        <end position="178"/>
    </location>
</feature>
<feature type="compositionally biased region" description="Basic and acidic residues" evidence="3">
    <location>
        <begin position="180"/>
        <end position="220"/>
    </location>
</feature>
<feature type="helix" evidence="5">
    <location>
        <begin position="241"/>
        <end position="253"/>
    </location>
</feature>
<feature type="helix" evidence="5">
    <location>
        <begin position="259"/>
        <end position="269"/>
    </location>
</feature>
<feature type="helix" evidence="5">
    <location>
        <begin position="273"/>
        <end position="291"/>
    </location>
</feature>
<keyword id="KW-0002">3D-structure</keyword>
<keyword id="KW-0238">DNA-binding</keyword>
<keyword id="KW-0371">Homeobox</keyword>
<keyword id="KW-0539">Nucleus</keyword>
<keyword id="KW-1267">Proteomics identification</keyword>
<keyword id="KW-1185">Reference proteome</keyword>
<keyword id="KW-0804">Transcription</keyword>
<keyword id="KW-0805">Transcription regulation</keyword>
<dbReference type="EMBL" id="AY338397">
    <property type="protein sequence ID" value="AAQ01189.1"/>
    <property type="molecule type" value="mRNA"/>
</dbReference>
<dbReference type="EMBL" id="BC126439">
    <property type="protein sequence ID" value="AAI26440.1"/>
    <property type="molecule type" value="mRNA"/>
</dbReference>
<dbReference type="EMBL" id="BC126441">
    <property type="protein sequence ID" value="AAI26442.1"/>
    <property type="molecule type" value="mRNA"/>
</dbReference>
<dbReference type="EMBL" id="AJ251753">
    <property type="protein sequence ID" value="CAB92440.1"/>
    <property type="molecule type" value="Genomic_DNA"/>
</dbReference>
<dbReference type="CCDS" id="CCDS730.1"/>
<dbReference type="RefSeq" id="NP_064447.1">
    <property type="nucleotide sequence ID" value="NM_020063.2"/>
</dbReference>
<dbReference type="PDB" id="8PM5">
    <property type="method" value="X-ray"/>
    <property type="resolution" value="2.40 A"/>
    <property type="chains" value="A/D/G/J/M/N=231-292"/>
</dbReference>
<dbReference type="PDB" id="8PM7">
    <property type="method" value="X-ray"/>
    <property type="resolution" value="1.70 A"/>
    <property type="chains" value="A/C/E/G=231-292"/>
</dbReference>
<dbReference type="PDB" id="8PMC">
    <property type="method" value="X-ray"/>
    <property type="resolution" value="1.85 A"/>
    <property type="chains" value="A/C/E/G=231-292"/>
</dbReference>
<dbReference type="PDB" id="8PMF">
    <property type="method" value="X-ray"/>
    <property type="resolution" value="0.95 A"/>
    <property type="chains" value="A=228-293"/>
</dbReference>
<dbReference type="PDB" id="8PMN">
    <property type="method" value="X-ray"/>
    <property type="resolution" value="1.30 A"/>
    <property type="chains" value="A=232-293"/>
</dbReference>
<dbReference type="PDB" id="8PMV">
    <property type="method" value="X-ray"/>
    <property type="resolution" value="2.10 A"/>
    <property type="chains" value="A/D/G/J=231-292"/>
</dbReference>
<dbReference type="PDB" id="8PN4">
    <property type="method" value="X-ray"/>
    <property type="resolution" value="2.60 A"/>
    <property type="chains" value="A/D/G/J/M=232-293"/>
</dbReference>
<dbReference type="PDB" id="8PNA">
    <property type="method" value="X-ray"/>
    <property type="resolution" value="1.45 A"/>
    <property type="chains" value="A=227-293"/>
</dbReference>
<dbReference type="PDB" id="8PNC">
    <property type="method" value="X-ray"/>
    <property type="resolution" value="2.05 A"/>
    <property type="chains" value="A/E/H/K=231-292"/>
</dbReference>
<dbReference type="PDB" id="8R7Z">
    <property type="method" value="X-ray"/>
    <property type="resolution" value="3.26 A"/>
    <property type="chains" value="A/E/G/K=232-291"/>
</dbReference>
<dbReference type="PDBsum" id="8PM5"/>
<dbReference type="PDBsum" id="8PM7"/>
<dbReference type="PDBsum" id="8PMC"/>
<dbReference type="PDBsum" id="8PMF"/>
<dbReference type="PDBsum" id="8PMN"/>
<dbReference type="PDBsum" id="8PMV"/>
<dbReference type="PDBsum" id="8PN4"/>
<dbReference type="PDBsum" id="8PNA"/>
<dbReference type="PDBsum" id="8PNC"/>
<dbReference type="PDBsum" id="8R7Z"/>
<dbReference type="SMR" id="Q9NY43"/>
<dbReference type="BioGRID" id="131253">
    <property type="interactions" value="2"/>
</dbReference>
<dbReference type="FunCoup" id="Q9NY43">
    <property type="interactions" value="1028"/>
</dbReference>
<dbReference type="IntAct" id="Q9NY43">
    <property type="interactions" value="2"/>
</dbReference>
<dbReference type="STRING" id="9606.ENSP00000359474"/>
<dbReference type="GlyGen" id="Q9NY43">
    <property type="glycosylation" value="1 site"/>
</dbReference>
<dbReference type="iPTMnet" id="Q9NY43"/>
<dbReference type="PhosphoSitePlus" id="Q9NY43"/>
<dbReference type="BioMuta" id="BARHL2"/>
<dbReference type="DMDM" id="47117915"/>
<dbReference type="jPOST" id="Q9NY43"/>
<dbReference type="MassIVE" id="Q9NY43"/>
<dbReference type="PaxDb" id="9606-ENSP00000359474"/>
<dbReference type="PeptideAtlas" id="Q9NY43"/>
<dbReference type="ProteomicsDB" id="83164"/>
<dbReference type="Antibodypedia" id="19858">
    <property type="antibodies" value="74 antibodies from 23 providers"/>
</dbReference>
<dbReference type="DNASU" id="343472"/>
<dbReference type="Ensembl" id="ENST00000370445.5">
    <property type="protein sequence ID" value="ENSP00000359474.3"/>
    <property type="gene ID" value="ENSG00000143032.8"/>
</dbReference>
<dbReference type="GeneID" id="343472"/>
<dbReference type="KEGG" id="hsa:343472"/>
<dbReference type="MANE-Select" id="ENST00000370445.5">
    <property type="protein sequence ID" value="ENSP00000359474.3"/>
    <property type="RefSeq nucleotide sequence ID" value="NM_020063.2"/>
    <property type="RefSeq protein sequence ID" value="NP_064447.1"/>
</dbReference>
<dbReference type="UCSC" id="uc001dns.4">
    <property type="organism name" value="human"/>
</dbReference>
<dbReference type="AGR" id="HGNC:954"/>
<dbReference type="CTD" id="343472"/>
<dbReference type="DisGeNET" id="343472"/>
<dbReference type="GeneCards" id="BARHL2"/>
<dbReference type="HGNC" id="HGNC:954">
    <property type="gene designation" value="BARHL2"/>
</dbReference>
<dbReference type="HPA" id="ENSG00000143032">
    <property type="expression patterns" value="Tissue enriched (brain)"/>
</dbReference>
<dbReference type="MIM" id="605212">
    <property type="type" value="gene"/>
</dbReference>
<dbReference type="neXtProt" id="NX_Q9NY43"/>
<dbReference type="OpenTargets" id="ENSG00000143032"/>
<dbReference type="PharmGKB" id="PA25258"/>
<dbReference type="VEuPathDB" id="HostDB:ENSG00000143032"/>
<dbReference type="eggNOG" id="KOG0488">
    <property type="taxonomic scope" value="Eukaryota"/>
</dbReference>
<dbReference type="GeneTree" id="ENSGT00940000158611"/>
<dbReference type="HOGENOM" id="CLU_074592_0_0_1"/>
<dbReference type="InParanoid" id="Q9NY43"/>
<dbReference type="OMA" id="DLKCHGT"/>
<dbReference type="OrthoDB" id="6159439at2759"/>
<dbReference type="PAN-GO" id="Q9NY43">
    <property type="GO annotations" value="4 GO annotations based on evolutionary models"/>
</dbReference>
<dbReference type="PhylomeDB" id="Q9NY43"/>
<dbReference type="TreeFam" id="TF316128"/>
<dbReference type="PathwayCommons" id="Q9NY43"/>
<dbReference type="SignaLink" id="Q9NY43"/>
<dbReference type="BioGRID-ORCS" id="343472">
    <property type="hits" value="13 hits in 1169 CRISPR screens"/>
</dbReference>
<dbReference type="GenomeRNAi" id="343472"/>
<dbReference type="Pharos" id="Q9NY43">
    <property type="development level" value="Tbio"/>
</dbReference>
<dbReference type="PRO" id="PR:Q9NY43"/>
<dbReference type="Proteomes" id="UP000005640">
    <property type="component" value="Chromosome 1"/>
</dbReference>
<dbReference type="RNAct" id="Q9NY43">
    <property type="molecule type" value="protein"/>
</dbReference>
<dbReference type="Bgee" id="ENSG00000143032">
    <property type="expression patterns" value="Expressed in cerebellum and 20 other cell types or tissues"/>
</dbReference>
<dbReference type="GO" id="GO:0000785">
    <property type="term" value="C:chromatin"/>
    <property type="evidence" value="ECO:0000247"/>
    <property type="project" value="NTNU_SB"/>
</dbReference>
<dbReference type="GO" id="GO:0005634">
    <property type="term" value="C:nucleus"/>
    <property type="evidence" value="ECO:0000318"/>
    <property type="project" value="GO_Central"/>
</dbReference>
<dbReference type="GO" id="GO:0001228">
    <property type="term" value="F:DNA-binding transcription activator activity, RNA polymerase II-specific"/>
    <property type="evidence" value="ECO:0007669"/>
    <property type="project" value="Ensembl"/>
</dbReference>
<dbReference type="GO" id="GO:0000981">
    <property type="term" value="F:DNA-binding transcription factor activity, RNA polymerase II-specific"/>
    <property type="evidence" value="ECO:0000247"/>
    <property type="project" value="NTNU_SB"/>
</dbReference>
<dbReference type="GO" id="GO:0000977">
    <property type="term" value="F:RNA polymerase II transcription regulatory region sequence-specific DNA binding"/>
    <property type="evidence" value="ECO:0000318"/>
    <property type="project" value="GO_Central"/>
</dbReference>
<dbReference type="GO" id="GO:1990837">
    <property type="term" value="F:sequence-specific double-stranded DNA binding"/>
    <property type="evidence" value="ECO:0000314"/>
    <property type="project" value="ARUK-UCL"/>
</dbReference>
<dbReference type="GO" id="GO:0035881">
    <property type="term" value="P:amacrine cell differentiation"/>
    <property type="evidence" value="ECO:0007669"/>
    <property type="project" value="Ensembl"/>
</dbReference>
<dbReference type="GO" id="GO:0001709">
    <property type="term" value="P:cell fate determination"/>
    <property type="evidence" value="ECO:0007669"/>
    <property type="project" value="Ensembl"/>
</dbReference>
<dbReference type="GO" id="GO:0001764">
    <property type="term" value="P:neuron migration"/>
    <property type="evidence" value="ECO:0007669"/>
    <property type="project" value="Ensembl"/>
</dbReference>
<dbReference type="GO" id="GO:0045727">
    <property type="term" value="P:positive regulation of translation"/>
    <property type="evidence" value="ECO:0007669"/>
    <property type="project" value="Ensembl"/>
</dbReference>
<dbReference type="GO" id="GO:0030516">
    <property type="term" value="P:regulation of axon extension"/>
    <property type="evidence" value="ECO:0007669"/>
    <property type="project" value="Ensembl"/>
</dbReference>
<dbReference type="GO" id="GO:0006357">
    <property type="term" value="P:regulation of transcription by RNA polymerase II"/>
    <property type="evidence" value="ECO:0000318"/>
    <property type="project" value="GO_Central"/>
</dbReference>
<dbReference type="CDD" id="cd00086">
    <property type="entry name" value="homeodomain"/>
    <property type="match status" value="1"/>
</dbReference>
<dbReference type="FunFam" id="1.10.10.60:FF:000097">
    <property type="entry name" value="barH-like 2 homeobox protein-like"/>
    <property type="match status" value="1"/>
</dbReference>
<dbReference type="Gene3D" id="1.10.10.60">
    <property type="entry name" value="Homeodomain-like"/>
    <property type="match status" value="1"/>
</dbReference>
<dbReference type="InterPro" id="IPR001356">
    <property type="entry name" value="HD"/>
</dbReference>
<dbReference type="InterPro" id="IPR020479">
    <property type="entry name" value="HD_metazoa"/>
</dbReference>
<dbReference type="InterPro" id="IPR017970">
    <property type="entry name" value="Homeobox_CS"/>
</dbReference>
<dbReference type="InterPro" id="IPR009057">
    <property type="entry name" value="Homeodomain-like_sf"/>
</dbReference>
<dbReference type="InterPro" id="IPR052145">
    <property type="entry name" value="Mediator/Homeobox_domain"/>
</dbReference>
<dbReference type="PANTHER" id="PTHR24330:SF4">
    <property type="entry name" value="BARH-LIKE 2 HOMEOBOX PROTEIN"/>
    <property type="match status" value="1"/>
</dbReference>
<dbReference type="PANTHER" id="PTHR24330">
    <property type="entry name" value="HOMEOBOX PROTEIN BARH-LIKE"/>
    <property type="match status" value="1"/>
</dbReference>
<dbReference type="Pfam" id="PF00046">
    <property type="entry name" value="Homeodomain"/>
    <property type="match status" value="1"/>
</dbReference>
<dbReference type="PRINTS" id="PR00024">
    <property type="entry name" value="HOMEOBOX"/>
</dbReference>
<dbReference type="SMART" id="SM00389">
    <property type="entry name" value="HOX"/>
    <property type="match status" value="1"/>
</dbReference>
<dbReference type="SUPFAM" id="SSF46689">
    <property type="entry name" value="Homeodomain-like"/>
    <property type="match status" value="1"/>
</dbReference>
<dbReference type="PROSITE" id="PS00027">
    <property type="entry name" value="HOMEOBOX_1"/>
    <property type="match status" value="1"/>
</dbReference>
<dbReference type="PROSITE" id="PS50071">
    <property type="entry name" value="HOMEOBOX_2"/>
    <property type="match status" value="1"/>
</dbReference>
<protein>
    <recommendedName>
        <fullName>BarH-like 2 homeobox protein</fullName>
    </recommendedName>
</protein>
<gene>
    <name type="primary">BARHL2</name>
</gene>